<sequence>MSRLPQRRALVLLSGGQDSATCLAWALARYGHVETLGFDYGQRHRVELDCRQRLIDGVRALPWPGQLGPDHMLTVDVLAQLGGSAMTDDVAIAMQADGLPNTFVPGRNLLFFTLAAALAYRRGLDVLVGGMSETDYSGYPDCRDSTLKALQVALSLGVDRPLTLETPLMWRSKADTWALAQRLGGDALVELIRCESHTCYLGQRGDLHAWGHGCGGCPACELRAQGWEQWTAQRSLNGA</sequence>
<accession>A1W9G0</accession>
<gene>
    <name evidence="1" type="primary">queC</name>
    <name type="ordered locus">Ajs_2744</name>
</gene>
<organism>
    <name type="scientific">Acidovorax sp. (strain JS42)</name>
    <dbReference type="NCBI Taxonomy" id="232721"/>
    <lineage>
        <taxon>Bacteria</taxon>
        <taxon>Pseudomonadati</taxon>
        <taxon>Pseudomonadota</taxon>
        <taxon>Betaproteobacteria</taxon>
        <taxon>Burkholderiales</taxon>
        <taxon>Comamonadaceae</taxon>
        <taxon>Acidovorax</taxon>
    </lineage>
</organism>
<comment type="function">
    <text evidence="1">Catalyzes the ATP-dependent conversion of 7-carboxy-7-deazaguanine (CDG) to 7-cyano-7-deazaguanine (preQ(0)).</text>
</comment>
<comment type="catalytic activity">
    <reaction evidence="1">
        <text>7-carboxy-7-deazaguanine + NH4(+) + ATP = 7-cyano-7-deazaguanine + ADP + phosphate + H2O + H(+)</text>
        <dbReference type="Rhea" id="RHEA:27982"/>
        <dbReference type="ChEBI" id="CHEBI:15377"/>
        <dbReference type="ChEBI" id="CHEBI:15378"/>
        <dbReference type="ChEBI" id="CHEBI:28938"/>
        <dbReference type="ChEBI" id="CHEBI:30616"/>
        <dbReference type="ChEBI" id="CHEBI:43474"/>
        <dbReference type="ChEBI" id="CHEBI:45075"/>
        <dbReference type="ChEBI" id="CHEBI:61036"/>
        <dbReference type="ChEBI" id="CHEBI:456216"/>
        <dbReference type="EC" id="6.3.4.20"/>
    </reaction>
</comment>
<comment type="cofactor">
    <cofactor evidence="1">
        <name>Zn(2+)</name>
        <dbReference type="ChEBI" id="CHEBI:29105"/>
    </cofactor>
    <text evidence="1">Binds 1 zinc ion per subunit.</text>
</comment>
<comment type="pathway">
    <text evidence="1">Purine metabolism; 7-cyano-7-deazaguanine biosynthesis.</text>
</comment>
<comment type="similarity">
    <text evidence="1">Belongs to the QueC family.</text>
</comment>
<evidence type="ECO:0000255" key="1">
    <source>
        <dbReference type="HAMAP-Rule" id="MF_01633"/>
    </source>
</evidence>
<dbReference type="EC" id="6.3.4.20" evidence="1"/>
<dbReference type="EMBL" id="CP000539">
    <property type="protein sequence ID" value="ABM42885.1"/>
    <property type="molecule type" value="Genomic_DNA"/>
</dbReference>
<dbReference type="SMR" id="A1W9G0"/>
<dbReference type="STRING" id="232721.Ajs_2744"/>
<dbReference type="KEGG" id="ajs:Ajs_2744"/>
<dbReference type="eggNOG" id="COG0603">
    <property type="taxonomic scope" value="Bacteria"/>
</dbReference>
<dbReference type="HOGENOM" id="CLU_081854_0_0_4"/>
<dbReference type="UniPathway" id="UPA00391"/>
<dbReference type="Proteomes" id="UP000000645">
    <property type="component" value="Chromosome"/>
</dbReference>
<dbReference type="GO" id="GO:0005524">
    <property type="term" value="F:ATP binding"/>
    <property type="evidence" value="ECO:0007669"/>
    <property type="project" value="UniProtKB-UniRule"/>
</dbReference>
<dbReference type="GO" id="GO:0016879">
    <property type="term" value="F:ligase activity, forming carbon-nitrogen bonds"/>
    <property type="evidence" value="ECO:0007669"/>
    <property type="project" value="UniProtKB-UniRule"/>
</dbReference>
<dbReference type="GO" id="GO:0008270">
    <property type="term" value="F:zinc ion binding"/>
    <property type="evidence" value="ECO:0007669"/>
    <property type="project" value="UniProtKB-UniRule"/>
</dbReference>
<dbReference type="GO" id="GO:0008616">
    <property type="term" value="P:queuosine biosynthetic process"/>
    <property type="evidence" value="ECO:0007669"/>
    <property type="project" value="UniProtKB-UniRule"/>
</dbReference>
<dbReference type="CDD" id="cd01995">
    <property type="entry name" value="QueC-like"/>
    <property type="match status" value="1"/>
</dbReference>
<dbReference type="Gene3D" id="3.40.50.620">
    <property type="entry name" value="HUPs"/>
    <property type="match status" value="1"/>
</dbReference>
<dbReference type="HAMAP" id="MF_01633">
    <property type="entry name" value="QueC"/>
    <property type="match status" value="1"/>
</dbReference>
<dbReference type="InterPro" id="IPR018317">
    <property type="entry name" value="QueC"/>
</dbReference>
<dbReference type="InterPro" id="IPR014729">
    <property type="entry name" value="Rossmann-like_a/b/a_fold"/>
</dbReference>
<dbReference type="NCBIfam" id="TIGR00364">
    <property type="entry name" value="7-cyano-7-deazaguanine synthase QueC"/>
    <property type="match status" value="1"/>
</dbReference>
<dbReference type="PANTHER" id="PTHR42914">
    <property type="entry name" value="7-CYANO-7-DEAZAGUANINE SYNTHASE"/>
    <property type="match status" value="1"/>
</dbReference>
<dbReference type="PANTHER" id="PTHR42914:SF1">
    <property type="entry name" value="7-CYANO-7-DEAZAGUANINE SYNTHASE"/>
    <property type="match status" value="1"/>
</dbReference>
<dbReference type="Pfam" id="PF06508">
    <property type="entry name" value="QueC"/>
    <property type="match status" value="1"/>
</dbReference>
<dbReference type="PIRSF" id="PIRSF006293">
    <property type="entry name" value="ExsB"/>
    <property type="match status" value="1"/>
</dbReference>
<dbReference type="SUPFAM" id="SSF52402">
    <property type="entry name" value="Adenine nucleotide alpha hydrolases-like"/>
    <property type="match status" value="1"/>
</dbReference>
<name>QUEC_ACISJ</name>
<keyword id="KW-0067">ATP-binding</keyword>
<keyword id="KW-0436">Ligase</keyword>
<keyword id="KW-0479">Metal-binding</keyword>
<keyword id="KW-0547">Nucleotide-binding</keyword>
<keyword id="KW-0671">Queuosine biosynthesis</keyword>
<keyword id="KW-0862">Zinc</keyword>
<proteinExistence type="inferred from homology"/>
<protein>
    <recommendedName>
        <fullName evidence="1">7-cyano-7-deazaguanine synthase</fullName>
        <ecNumber evidence="1">6.3.4.20</ecNumber>
    </recommendedName>
    <alternativeName>
        <fullName evidence="1">7-cyano-7-carbaguanine synthase</fullName>
    </alternativeName>
    <alternativeName>
        <fullName evidence="1">PreQ(0) synthase</fullName>
    </alternativeName>
    <alternativeName>
        <fullName evidence="1">Queuosine biosynthesis protein QueC</fullName>
    </alternativeName>
</protein>
<feature type="chain" id="PRO_0000336883" description="7-cyano-7-deazaguanine synthase">
    <location>
        <begin position="1"/>
        <end position="239"/>
    </location>
</feature>
<feature type="binding site" evidence="1">
    <location>
        <begin position="13"/>
        <end position="23"/>
    </location>
    <ligand>
        <name>ATP</name>
        <dbReference type="ChEBI" id="CHEBI:30616"/>
    </ligand>
</feature>
<feature type="binding site" evidence="1">
    <location>
        <position position="199"/>
    </location>
    <ligand>
        <name>Zn(2+)</name>
        <dbReference type="ChEBI" id="CHEBI:29105"/>
    </ligand>
</feature>
<feature type="binding site" evidence="1">
    <location>
        <position position="214"/>
    </location>
    <ligand>
        <name>Zn(2+)</name>
        <dbReference type="ChEBI" id="CHEBI:29105"/>
    </ligand>
</feature>
<feature type="binding site" evidence="1">
    <location>
        <position position="217"/>
    </location>
    <ligand>
        <name>Zn(2+)</name>
        <dbReference type="ChEBI" id="CHEBI:29105"/>
    </ligand>
</feature>
<feature type="binding site" evidence="1">
    <location>
        <position position="220"/>
    </location>
    <ligand>
        <name>Zn(2+)</name>
        <dbReference type="ChEBI" id="CHEBI:29105"/>
    </ligand>
</feature>
<reference key="1">
    <citation type="submission" date="2006-12" db="EMBL/GenBank/DDBJ databases">
        <title>Complete sequence of chromosome 1 of Acidovorax sp. JS42.</title>
        <authorList>
            <person name="Copeland A."/>
            <person name="Lucas S."/>
            <person name="Lapidus A."/>
            <person name="Barry K."/>
            <person name="Detter J.C."/>
            <person name="Glavina del Rio T."/>
            <person name="Dalin E."/>
            <person name="Tice H."/>
            <person name="Pitluck S."/>
            <person name="Chertkov O."/>
            <person name="Brettin T."/>
            <person name="Bruce D."/>
            <person name="Han C."/>
            <person name="Tapia R."/>
            <person name="Gilna P."/>
            <person name="Schmutz J."/>
            <person name="Larimer F."/>
            <person name="Land M."/>
            <person name="Hauser L."/>
            <person name="Kyrpides N."/>
            <person name="Kim E."/>
            <person name="Stahl D."/>
            <person name="Richardson P."/>
        </authorList>
    </citation>
    <scope>NUCLEOTIDE SEQUENCE [LARGE SCALE GENOMIC DNA]</scope>
    <source>
        <strain>JS42</strain>
    </source>
</reference>